<gene>
    <name evidence="7" type="primary">Txndc12</name>
</gene>
<evidence type="ECO:0000250" key="1">
    <source>
        <dbReference type="UniProtKB" id="O95881"/>
    </source>
</evidence>
<evidence type="ECO:0000255" key="2"/>
<evidence type="ECO:0000255" key="3">
    <source>
        <dbReference type="PROSITE-ProRule" id="PRU00691"/>
    </source>
</evidence>
<evidence type="ECO:0000255" key="4">
    <source>
        <dbReference type="PROSITE-ProRule" id="PRU10138"/>
    </source>
</evidence>
<evidence type="ECO:0000269" key="5">
    <source>
    </source>
</evidence>
<evidence type="ECO:0000305" key="6"/>
<evidence type="ECO:0000312" key="7">
    <source>
        <dbReference type="RGD" id="1305960"/>
    </source>
</evidence>
<reference key="1">
    <citation type="journal article" date="2004" name="Genome Res.">
        <title>The status, quality, and expansion of the NIH full-length cDNA project: the Mammalian Gene Collection (MGC).</title>
        <authorList>
            <consortium name="The MGC Project Team"/>
        </authorList>
    </citation>
    <scope>NUCLEOTIDE SEQUENCE [LARGE SCALE MRNA]</scope>
    <source>
        <tissue>Placenta</tissue>
    </source>
</reference>
<reference key="2">
    <citation type="journal article" date="2003" name="Mol. Cell. Proteomics">
        <title>ERp19 and ERp46, new members of the thioredoxin family of endoplasmic reticulum proteins.</title>
        <authorList>
            <person name="Knoblach B."/>
            <person name="Keller B.O."/>
            <person name="Groenendyk J."/>
            <person name="Aldred S."/>
            <person name="Zheng J."/>
            <person name="Lemire B.D."/>
            <person name="Li L."/>
            <person name="Michalak M."/>
        </authorList>
    </citation>
    <scope>SUBCELLULAR LOCATION</scope>
</reference>
<sequence length="170" mass="19019">MSLRFGATCLLSFSFLLLITSSDGRTGLGKGFGDHIHWRTLEDGKKEAAASGLPLMVIIHKSWCGACKALKPKFAESTEISELSHNFVMVNLEDEEEPRDEDFSPDGGYIPRILFLDPSGKVRPEIINESGNPSYKYFYVSAEQVVQGMKEAQVRLTGDAFREKHFQDEL</sequence>
<feature type="signal peptide" evidence="1">
    <location>
        <begin position="1"/>
        <end position="24"/>
    </location>
</feature>
<feature type="chain" id="PRO_0000233975" description="Thioredoxin domain-containing protein 12">
    <location>
        <begin position="25"/>
        <end position="170"/>
    </location>
</feature>
<feature type="short sequence motif" description="Prevents secretion from ER" evidence="4">
    <location>
        <begin position="167"/>
        <end position="170"/>
    </location>
</feature>
<feature type="glycosylation site" description="N-linked (GlcNAc...) asparagine" evidence="2">
    <location>
        <position position="128"/>
    </location>
</feature>
<feature type="disulfide bond" description="Redox-active" evidence="3">
    <location>
        <begin position="64"/>
        <end position="67"/>
    </location>
</feature>
<keyword id="KW-1015">Disulfide bond</keyword>
<keyword id="KW-0256">Endoplasmic reticulum</keyword>
<keyword id="KW-0325">Glycoprotein</keyword>
<keyword id="KW-0560">Oxidoreductase</keyword>
<keyword id="KW-0676">Redox-active center</keyword>
<keyword id="KW-1185">Reference proteome</keyword>
<keyword id="KW-0732">Signal</keyword>
<proteinExistence type="evidence at transcript level"/>
<organism>
    <name type="scientific">Rattus norvegicus</name>
    <name type="common">Rat</name>
    <dbReference type="NCBI Taxonomy" id="10116"/>
    <lineage>
        <taxon>Eukaryota</taxon>
        <taxon>Metazoa</taxon>
        <taxon>Chordata</taxon>
        <taxon>Craniata</taxon>
        <taxon>Vertebrata</taxon>
        <taxon>Euteleostomi</taxon>
        <taxon>Mammalia</taxon>
        <taxon>Eutheria</taxon>
        <taxon>Euarchontoglires</taxon>
        <taxon>Glires</taxon>
        <taxon>Rodentia</taxon>
        <taxon>Myomorpha</taxon>
        <taxon>Muroidea</taxon>
        <taxon>Muridae</taxon>
        <taxon>Murinae</taxon>
        <taxon>Rattus</taxon>
    </lineage>
</organism>
<accession>Q498E0</accession>
<protein>
    <recommendedName>
        <fullName evidence="1">Thioredoxin domain-containing protein 12</fullName>
        <ecNumber evidence="1">1.8.4.2</ecNumber>
    </recommendedName>
</protein>
<comment type="function">
    <text evidence="1">Protein-disulfide reductase of the endoplasmic reticulum that promotes disulfide bond formation in client proteins through its thiol-disulfide oxidase activity.</text>
</comment>
<comment type="catalytic activity">
    <reaction evidence="1">
        <text>[protein]-disulfide + 2 glutathione = [protein]-dithiol + glutathione disulfide</text>
        <dbReference type="Rhea" id="RHEA:21064"/>
        <dbReference type="Rhea" id="RHEA-COMP:10593"/>
        <dbReference type="Rhea" id="RHEA-COMP:10594"/>
        <dbReference type="ChEBI" id="CHEBI:29950"/>
        <dbReference type="ChEBI" id="CHEBI:50058"/>
        <dbReference type="ChEBI" id="CHEBI:57925"/>
        <dbReference type="ChEBI" id="CHEBI:58297"/>
        <dbReference type="EC" id="1.8.4.2"/>
    </reaction>
    <physiologicalReaction direction="right-to-left" evidence="1">
        <dbReference type="Rhea" id="RHEA:21066"/>
    </physiologicalReaction>
</comment>
<comment type="subcellular location">
    <subcellularLocation>
        <location evidence="4 5">Endoplasmic reticulum lumen</location>
    </subcellularLocation>
</comment>
<comment type="sequence caution" evidence="6">
    <conflict type="erroneous initiation">
        <sequence resource="EMBL-CDS" id="AAI00256"/>
    </conflict>
</comment>
<dbReference type="EC" id="1.8.4.2" evidence="1"/>
<dbReference type="EMBL" id="BC100255">
    <property type="protein sequence ID" value="AAI00256.1"/>
    <property type="status" value="ALT_INIT"/>
    <property type="molecule type" value="mRNA"/>
</dbReference>
<dbReference type="RefSeq" id="NP_001094310.1">
    <property type="nucleotide sequence ID" value="NM_001100840.1"/>
</dbReference>
<dbReference type="SMR" id="Q498E0"/>
<dbReference type="BioGRID" id="255857">
    <property type="interactions" value="1"/>
</dbReference>
<dbReference type="FunCoup" id="Q498E0">
    <property type="interactions" value="2192"/>
</dbReference>
<dbReference type="IntAct" id="Q498E0">
    <property type="interactions" value="2"/>
</dbReference>
<dbReference type="STRING" id="10116.ENSRNOP00000010700"/>
<dbReference type="GlyCosmos" id="Q498E0">
    <property type="glycosylation" value="1 site, No reported glycans"/>
</dbReference>
<dbReference type="GlyGen" id="Q498E0">
    <property type="glycosylation" value="1 site"/>
</dbReference>
<dbReference type="iPTMnet" id="Q498E0"/>
<dbReference type="PhosphoSitePlus" id="Q498E0"/>
<dbReference type="jPOST" id="Q498E0"/>
<dbReference type="PaxDb" id="10116-ENSRNOP00000010700"/>
<dbReference type="Ensembl" id="ENSRNOT00000100650.1">
    <property type="protein sequence ID" value="ENSRNOP00000094562.1"/>
    <property type="gene ID" value="ENSRNOG00000008090.7"/>
</dbReference>
<dbReference type="GeneID" id="298370"/>
<dbReference type="KEGG" id="rno:298370"/>
<dbReference type="UCSC" id="RGD:1305960">
    <property type="organism name" value="rat"/>
</dbReference>
<dbReference type="AGR" id="RGD:1305960"/>
<dbReference type="CTD" id="51060"/>
<dbReference type="RGD" id="1305960">
    <property type="gene designation" value="Txndc12"/>
</dbReference>
<dbReference type="eggNOG" id="ENOG502RXP1">
    <property type="taxonomic scope" value="Eukaryota"/>
</dbReference>
<dbReference type="GeneTree" id="ENSGT00530000063273"/>
<dbReference type="HOGENOM" id="CLU_088048_2_0_1"/>
<dbReference type="InParanoid" id="Q498E0"/>
<dbReference type="OMA" id="SEHFVMV"/>
<dbReference type="OrthoDB" id="52309at9989"/>
<dbReference type="TreeFam" id="TF321449"/>
<dbReference type="PRO" id="PR:Q498E0"/>
<dbReference type="Proteomes" id="UP000002494">
    <property type="component" value="Chromosome 5"/>
</dbReference>
<dbReference type="Bgee" id="ENSRNOG00000008090">
    <property type="expression patterns" value="Expressed in ovary and 20 other cell types or tissues"/>
</dbReference>
<dbReference type="GO" id="GO:0005783">
    <property type="term" value="C:endoplasmic reticulum"/>
    <property type="evidence" value="ECO:0000266"/>
    <property type="project" value="RGD"/>
</dbReference>
<dbReference type="GO" id="GO:0005788">
    <property type="term" value="C:endoplasmic reticulum lumen"/>
    <property type="evidence" value="ECO:0000314"/>
    <property type="project" value="UniProtKB"/>
</dbReference>
<dbReference type="GO" id="GO:0019153">
    <property type="term" value="F:protein-disulfide reductase (glutathione) activity"/>
    <property type="evidence" value="ECO:0000250"/>
    <property type="project" value="UniProtKB"/>
</dbReference>
<dbReference type="GO" id="GO:0015035">
    <property type="term" value="F:protein-disulfide reductase activity"/>
    <property type="evidence" value="ECO:0000266"/>
    <property type="project" value="RGD"/>
</dbReference>
<dbReference type="GO" id="GO:1902236">
    <property type="term" value="P:negative regulation of endoplasmic reticulum stress-induced intrinsic apoptotic signaling pathway"/>
    <property type="evidence" value="ECO:0000266"/>
    <property type="project" value="RGD"/>
</dbReference>
<dbReference type="CDD" id="cd02959">
    <property type="entry name" value="ERp19"/>
    <property type="match status" value="1"/>
</dbReference>
<dbReference type="FunFam" id="3.40.30.10:FF:000099">
    <property type="entry name" value="thioredoxin domain-containing protein 12"/>
    <property type="match status" value="1"/>
</dbReference>
<dbReference type="Gene3D" id="3.40.30.10">
    <property type="entry name" value="Glutaredoxin"/>
    <property type="match status" value="1"/>
</dbReference>
<dbReference type="InterPro" id="IPR051099">
    <property type="entry name" value="AGR/TXD"/>
</dbReference>
<dbReference type="InterPro" id="IPR037462">
    <property type="entry name" value="ERp19"/>
</dbReference>
<dbReference type="InterPro" id="IPR036249">
    <property type="entry name" value="Thioredoxin-like_sf"/>
</dbReference>
<dbReference type="InterPro" id="IPR017937">
    <property type="entry name" value="Thioredoxin_CS"/>
</dbReference>
<dbReference type="InterPro" id="IPR013766">
    <property type="entry name" value="Thioredoxin_domain"/>
</dbReference>
<dbReference type="PANTHER" id="PTHR15337">
    <property type="entry name" value="ANTERIOR GRADIENT PROTEIN-RELATED"/>
    <property type="match status" value="1"/>
</dbReference>
<dbReference type="PANTHER" id="PTHR15337:SF10">
    <property type="entry name" value="THIOREDOXIN DOMAIN-CONTAINING PROTEIN 12"/>
    <property type="match status" value="1"/>
</dbReference>
<dbReference type="Pfam" id="PF13899">
    <property type="entry name" value="Thioredoxin_7"/>
    <property type="match status" value="1"/>
</dbReference>
<dbReference type="SUPFAM" id="SSF52833">
    <property type="entry name" value="Thioredoxin-like"/>
    <property type="match status" value="1"/>
</dbReference>
<dbReference type="PROSITE" id="PS00014">
    <property type="entry name" value="ER_TARGET"/>
    <property type="match status" value="1"/>
</dbReference>
<dbReference type="PROSITE" id="PS00194">
    <property type="entry name" value="THIOREDOXIN_1"/>
    <property type="match status" value="1"/>
</dbReference>
<dbReference type="PROSITE" id="PS51352">
    <property type="entry name" value="THIOREDOXIN_2"/>
    <property type="match status" value="1"/>
</dbReference>
<name>TXD12_RAT</name>